<evidence type="ECO:0000255" key="1">
    <source>
        <dbReference type="HAMAP-Rule" id="MF_03115"/>
    </source>
</evidence>
<organism>
    <name type="scientific">Theileria annulata</name>
    <dbReference type="NCBI Taxonomy" id="5874"/>
    <lineage>
        <taxon>Eukaryota</taxon>
        <taxon>Sar</taxon>
        <taxon>Alveolata</taxon>
        <taxon>Apicomplexa</taxon>
        <taxon>Aconoidasida</taxon>
        <taxon>Piroplasmida</taxon>
        <taxon>Theileriidae</taxon>
        <taxon>Theileria</taxon>
    </lineage>
</organism>
<comment type="function">
    <text evidence="1">Component of the cytosolic iron-sulfur (Fe-S) protein assembly (CIA) machinery. Required for the maturation of extramitochondrial Fe-S proteins. Part of an electron transfer chain functioning in an early step of cytosolic Fe-S biogenesis, facilitating the de novo assembly of a [4Fe-4S] cluster on the cytosolic Fe-S scaffold complex. Electrons are transferred from NADPH via a FAD- and FMN-containing diflavin oxidoreductase. Together with the diflavin oxidoreductase, also required for the assembly of the diferric tyrosyl radical cofactor of ribonucleotide reductase (RNR), probably by providing electrons for reduction during radical cofactor maturation in the catalytic small subunit.</text>
</comment>
<comment type="cofactor">
    <cofactor evidence="1">
        <name>[2Fe-2S] cluster</name>
        <dbReference type="ChEBI" id="CHEBI:190135"/>
    </cofactor>
</comment>
<comment type="cofactor">
    <cofactor evidence="1">
        <name>[4Fe-4S] cluster</name>
        <dbReference type="ChEBI" id="CHEBI:49883"/>
    </cofactor>
</comment>
<comment type="subunit">
    <text evidence="1">Monomer.</text>
</comment>
<comment type="subcellular location">
    <subcellularLocation>
        <location evidence="1">Cytoplasm</location>
    </subcellularLocation>
    <subcellularLocation>
        <location evidence="1">Mitochondrion intermembrane space</location>
    </subcellularLocation>
</comment>
<comment type="domain">
    <text evidence="1">The C-terminal domain binds 2 Fe-S clusters but is otherwise mostly in an intrinsically disordered conformation.</text>
</comment>
<comment type="domain">
    <text evidence="1">The N-terminal domain has structural similarity with S-adenosyl-L-methionine-dependent methyltransferases, but does not bind S-adenosyl-L-methionine. It is required for correct assembly of the 2 Fe-S clusters.</text>
</comment>
<comment type="domain">
    <text evidence="1">The twin Cx2C motifs are involved in the recognition by the mitochondrial MIA40-ERV1 disulfide relay system. The formation of 2 disulfide bonds in the Cx2C motifs through dithiol/disulfide exchange reactions effectively traps the protein in the mitochondrial intermembrane space.</text>
</comment>
<comment type="similarity">
    <text evidence="1">Belongs to the anamorsin family.</text>
</comment>
<gene>
    <name type="ORF">TA20710</name>
</gene>
<accession>Q4UH15</accession>
<name>DRE2_THEAN</name>
<sequence>MPKETLVVSKSEELAFEYFLSFNKFSSGSSSFLGQVTKASFFSSLASSGSKSSLNSLNNEFDHLSLYEIKNSSLETEKYKTILVVCDNTDEFYGEKGLSNLTLFHNSLLPNGKFVIAIPPNSSHEQEIKKEMMYSGLIDVVSSVYYFTTFITGVRPNWKSKTDKKSPSMIDAAPIDGYISKAPDYESCSTKPRACANCTCGRAEREKLNSTDLTSDVDAPTSSCGNCYLGDAFRCESCPYKGLPAFKPGEKVILD</sequence>
<keyword id="KW-0001">2Fe-2S</keyword>
<keyword id="KW-0004">4Fe-4S</keyword>
<keyword id="KW-0963">Cytoplasm</keyword>
<keyword id="KW-0408">Iron</keyword>
<keyword id="KW-0411">Iron-sulfur</keyword>
<keyword id="KW-0479">Metal-binding</keyword>
<keyword id="KW-0496">Mitochondrion</keyword>
<keyword id="KW-1185">Reference proteome</keyword>
<proteinExistence type="inferred from homology"/>
<protein>
    <recommendedName>
        <fullName evidence="1">Anamorsin homolog</fullName>
    </recommendedName>
    <alternativeName>
        <fullName evidence="1">Fe-S cluster assembly protein DRE2 homolog</fullName>
    </alternativeName>
</protein>
<reference key="1">
    <citation type="journal article" date="2005" name="Science">
        <title>Genome of the host-cell transforming parasite Theileria annulata compared with T. parva.</title>
        <authorList>
            <person name="Pain A."/>
            <person name="Renauld H."/>
            <person name="Berriman M."/>
            <person name="Murphy L."/>
            <person name="Yeats C.A."/>
            <person name="Weir W."/>
            <person name="Kerhornou A."/>
            <person name="Aslett M."/>
            <person name="Bishop R."/>
            <person name="Bouchier C."/>
            <person name="Cochet M."/>
            <person name="Coulson R.M.R."/>
            <person name="Cronin A."/>
            <person name="de Villiers E.P."/>
            <person name="Fraser A."/>
            <person name="Fosker N."/>
            <person name="Gardner M."/>
            <person name="Goble A."/>
            <person name="Griffiths-Jones S."/>
            <person name="Harris D.E."/>
            <person name="Katzer F."/>
            <person name="Larke N."/>
            <person name="Lord A."/>
            <person name="Maser P."/>
            <person name="McKellar S."/>
            <person name="Mooney P."/>
            <person name="Morton F."/>
            <person name="Nene V."/>
            <person name="O'Neil S."/>
            <person name="Price C."/>
            <person name="Quail M.A."/>
            <person name="Rabbinowitsch E."/>
            <person name="Rawlings N.D."/>
            <person name="Rutter S."/>
            <person name="Saunders D."/>
            <person name="Seeger K."/>
            <person name="Shah T."/>
            <person name="Squares R."/>
            <person name="Squares S."/>
            <person name="Tivey A."/>
            <person name="Walker A.R."/>
            <person name="Woodward J."/>
            <person name="Dobbelaere D.A.E."/>
            <person name="Langsley G."/>
            <person name="Rajandream M.A."/>
            <person name="McKeever D."/>
            <person name="Shiels B."/>
            <person name="Tait A."/>
            <person name="Barrell B.G."/>
            <person name="Hall N."/>
        </authorList>
    </citation>
    <scope>NUCLEOTIDE SEQUENCE [LARGE SCALE GENOMIC DNA]</scope>
    <source>
        <strain>Ankara</strain>
    </source>
</reference>
<dbReference type="EMBL" id="CR940347">
    <property type="protein sequence ID" value="CAI73624.1"/>
    <property type="molecule type" value="Genomic_DNA"/>
</dbReference>
<dbReference type="RefSeq" id="XP_954301.1">
    <property type="nucleotide sequence ID" value="XM_949208.1"/>
</dbReference>
<dbReference type="STRING" id="5874.Q4UH15"/>
<dbReference type="GeneID" id="3863951"/>
<dbReference type="KEGG" id="tan:TA20710"/>
<dbReference type="VEuPathDB" id="PiroplasmaDB:TA20710"/>
<dbReference type="eggNOG" id="KOG4020">
    <property type="taxonomic scope" value="Eukaryota"/>
</dbReference>
<dbReference type="InParanoid" id="Q4UH15"/>
<dbReference type="OMA" id="TKPRACA"/>
<dbReference type="OrthoDB" id="311633at2759"/>
<dbReference type="Proteomes" id="UP000001950">
    <property type="component" value="Chromosome 1 part 1"/>
</dbReference>
<dbReference type="GO" id="GO:0005758">
    <property type="term" value="C:mitochondrial intermembrane space"/>
    <property type="evidence" value="ECO:0007669"/>
    <property type="project" value="UniProtKB-SubCell"/>
</dbReference>
<dbReference type="GO" id="GO:0051537">
    <property type="term" value="F:2 iron, 2 sulfur cluster binding"/>
    <property type="evidence" value="ECO:0007669"/>
    <property type="project" value="UniProtKB-UniRule"/>
</dbReference>
<dbReference type="GO" id="GO:0051539">
    <property type="term" value="F:4 iron, 4 sulfur cluster binding"/>
    <property type="evidence" value="ECO:0007669"/>
    <property type="project" value="UniProtKB-KW"/>
</dbReference>
<dbReference type="GO" id="GO:0009055">
    <property type="term" value="F:electron transfer activity"/>
    <property type="evidence" value="ECO:0007669"/>
    <property type="project" value="UniProtKB-UniRule"/>
</dbReference>
<dbReference type="GO" id="GO:0046872">
    <property type="term" value="F:metal ion binding"/>
    <property type="evidence" value="ECO:0007669"/>
    <property type="project" value="UniProtKB-KW"/>
</dbReference>
<dbReference type="GO" id="GO:0016226">
    <property type="term" value="P:iron-sulfur cluster assembly"/>
    <property type="evidence" value="ECO:0007669"/>
    <property type="project" value="UniProtKB-UniRule"/>
</dbReference>
<dbReference type="HAMAP" id="MF_03115">
    <property type="entry name" value="Anamorsin"/>
    <property type="match status" value="1"/>
</dbReference>
<dbReference type="InterPro" id="IPR007785">
    <property type="entry name" value="Anamorsin"/>
</dbReference>
<dbReference type="InterPro" id="IPR046408">
    <property type="entry name" value="CIAPIN1"/>
</dbReference>
<dbReference type="PANTHER" id="PTHR13273">
    <property type="entry name" value="ANAMORSIN"/>
    <property type="match status" value="1"/>
</dbReference>
<dbReference type="PANTHER" id="PTHR13273:SF14">
    <property type="entry name" value="ANAMORSIN"/>
    <property type="match status" value="1"/>
</dbReference>
<dbReference type="Pfam" id="PF05093">
    <property type="entry name" value="CIAPIN1"/>
    <property type="match status" value="1"/>
</dbReference>
<feature type="chain" id="PRO_0000392360" description="Anamorsin homolog">
    <location>
        <begin position="1"/>
        <end position="255"/>
    </location>
</feature>
<feature type="region of interest" description="N-terminal SAM-like domain" evidence="1">
    <location>
        <begin position="1"/>
        <end position="163"/>
    </location>
</feature>
<feature type="region of interest" description="Linker" evidence="1">
    <location>
        <begin position="164"/>
        <end position="185"/>
    </location>
</feature>
<feature type="region of interest" description="Fe-S binding site A" evidence="1">
    <location>
        <begin position="188"/>
        <end position="200"/>
    </location>
</feature>
<feature type="region of interest" description="Fe-S binding site B" evidence="1">
    <location>
        <begin position="224"/>
        <end position="238"/>
    </location>
</feature>
<feature type="short sequence motif" description="Cx2C motif 1" evidence="1">
    <location>
        <begin position="224"/>
        <end position="227"/>
    </location>
</feature>
<feature type="short sequence motif" description="Cx2C motif 2" evidence="1">
    <location>
        <begin position="235"/>
        <end position="238"/>
    </location>
</feature>
<feature type="binding site" evidence="1">
    <location>
        <position position="188"/>
    </location>
    <ligand>
        <name>[2Fe-2S] cluster</name>
        <dbReference type="ChEBI" id="CHEBI:190135"/>
    </ligand>
</feature>
<feature type="binding site" evidence="1">
    <location>
        <position position="195"/>
    </location>
    <ligand>
        <name>[2Fe-2S] cluster</name>
        <dbReference type="ChEBI" id="CHEBI:190135"/>
    </ligand>
</feature>
<feature type="binding site" evidence="1">
    <location>
        <position position="198"/>
    </location>
    <ligand>
        <name>[2Fe-2S] cluster</name>
        <dbReference type="ChEBI" id="CHEBI:190135"/>
    </ligand>
</feature>
<feature type="binding site" evidence="1">
    <location>
        <position position="200"/>
    </location>
    <ligand>
        <name>[2Fe-2S] cluster</name>
        <dbReference type="ChEBI" id="CHEBI:190135"/>
    </ligand>
</feature>
<feature type="binding site" evidence="1">
    <location>
        <position position="224"/>
    </location>
    <ligand>
        <name>[4Fe-4S] cluster</name>
        <dbReference type="ChEBI" id="CHEBI:49883"/>
    </ligand>
</feature>
<feature type="binding site" evidence="1">
    <location>
        <position position="227"/>
    </location>
    <ligand>
        <name>[4Fe-4S] cluster</name>
        <dbReference type="ChEBI" id="CHEBI:49883"/>
    </ligand>
</feature>
<feature type="binding site" evidence="1">
    <location>
        <position position="235"/>
    </location>
    <ligand>
        <name>[4Fe-4S] cluster</name>
        <dbReference type="ChEBI" id="CHEBI:49883"/>
    </ligand>
</feature>
<feature type="binding site" evidence="1">
    <location>
        <position position="238"/>
    </location>
    <ligand>
        <name>[4Fe-4S] cluster</name>
        <dbReference type="ChEBI" id="CHEBI:49883"/>
    </ligand>
</feature>